<accession>B3QRM1</accession>
<comment type="function">
    <text evidence="1">Binds directly to 23S ribosomal RNA and is necessary for the in vitro assembly process of the 50S ribosomal subunit. It is not involved in the protein synthesizing functions of that subunit.</text>
</comment>
<comment type="similarity">
    <text evidence="1">Belongs to the bacterial ribosomal protein bL20 family.</text>
</comment>
<keyword id="KW-0687">Ribonucleoprotein</keyword>
<keyword id="KW-0689">Ribosomal protein</keyword>
<keyword id="KW-0694">RNA-binding</keyword>
<keyword id="KW-0699">rRNA-binding</keyword>
<protein>
    <recommendedName>
        <fullName evidence="1">Large ribosomal subunit protein bL20</fullName>
    </recommendedName>
    <alternativeName>
        <fullName evidence="2">50S ribosomal protein L20</fullName>
    </alternativeName>
</protein>
<dbReference type="EMBL" id="CP001099">
    <property type="protein sequence ID" value="ACF10543.1"/>
    <property type="molecule type" value="Genomic_DNA"/>
</dbReference>
<dbReference type="RefSeq" id="WP_012501378.1">
    <property type="nucleotide sequence ID" value="NC_011027.1"/>
</dbReference>
<dbReference type="SMR" id="B3QRM1"/>
<dbReference type="STRING" id="517417.Cpar_0115"/>
<dbReference type="KEGG" id="cpc:Cpar_0115"/>
<dbReference type="eggNOG" id="COG0292">
    <property type="taxonomic scope" value="Bacteria"/>
</dbReference>
<dbReference type="HOGENOM" id="CLU_123265_0_1_10"/>
<dbReference type="OrthoDB" id="9808966at2"/>
<dbReference type="Proteomes" id="UP000008811">
    <property type="component" value="Chromosome"/>
</dbReference>
<dbReference type="GO" id="GO:1990904">
    <property type="term" value="C:ribonucleoprotein complex"/>
    <property type="evidence" value="ECO:0007669"/>
    <property type="project" value="UniProtKB-KW"/>
</dbReference>
<dbReference type="GO" id="GO:0005840">
    <property type="term" value="C:ribosome"/>
    <property type="evidence" value="ECO:0007669"/>
    <property type="project" value="UniProtKB-KW"/>
</dbReference>
<dbReference type="GO" id="GO:0019843">
    <property type="term" value="F:rRNA binding"/>
    <property type="evidence" value="ECO:0007669"/>
    <property type="project" value="UniProtKB-UniRule"/>
</dbReference>
<dbReference type="GO" id="GO:0003735">
    <property type="term" value="F:structural constituent of ribosome"/>
    <property type="evidence" value="ECO:0007669"/>
    <property type="project" value="InterPro"/>
</dbReference>
<dbReference type="GO" id="GO:0000027">
    <property type="term" value="P:ribosomal large subunit assembly"/>
    <property type="evidence" value="ECO:0007669"/>
    <property type="project" value="UniProtKB-UniRule"/>
</dbReference>
<dbReference type="GO" id="GO:0006412">
    <property type="term" value="P:translation"/>
    <property type="evidence" value="ECO:0007669"/>
    <property type="project" value="InterPro"/>
</dbReference>
<dbReference type="CDD" id="cd07026">
    <property type="entry name" value="Ribosomal_L20"/>
    <property type="match status" value="1"/>
</dbReference>
<dbReference type="FunFam" id="1.10.1900.20:FF:000001">
    <property type="entry name" value="50S ribosomal protein L20"/>
    <property type="match status" value="1"/>
</dbReference>
<dbReference type="Gene3D" id="6.10.160.10">
    <property type="match status" value="1"/>
</dbReference>
<dbReference type="Gene3D" id="1.10.1900.20">
    <property type="entry name" value="Ribosomal protein L20"/>
    <property type="match status" value="1"/>
</dbReference>
<dbReference type="HAMAP" id="MF_00382">
    <property type="entry name" value="Ribosomal_bL20"/>
    <property type="match status" value="1"/>
</dbReference>
<dbReference type="InterPro" id="IPR005813">
    <property type="entry name" value="Ribosomal_bL20"/>
</dbReference>
<dbReference type="InterPro" id="IPR049946">
    <property type="entry name" value="RIBOSOMAL_L20_CS"/>
</dbReference>
<dbReference type="InterPro" id="IPR035566">
    <property type="entry name" value="Ribosomal_protein_bL20_C"/>
</dbReference>
<dbReference type="NCBIfam" id="TIGR01032">
    <property type="entry name" value="rplT_bact"/>
    <property type="match status" value="1"/>
</dbReference>
<dbReference type="PANTHER" id="PTHR10986">
    <property type="entry name" value="39S RIBOSOMAL PROTEIN L20"/>
    <property type="match status" value="1"/>
</dbReference>
<dbReference type="Pfam" id="PF00453">
    <property type="entry name" value="Ribosomal_L20"/>
    <property type="match status" value="1"/>
</dbReference>
<dbReference type="PRINTS" id="PR00062">
    <property type="entry name" value="RIBOSOMALL20"/>
</dbReference>
<dbReference type="SUPFAM" id="SSF74731">
    <property type="entry name" value="Ribosomal protein L20"/>
    <property type="match status" value="1"/>
</dbReference>
<dbReference type="PROSITE" id="PS00937">
    <property type="entry name" value="RIBOSOMAL_L20"/>
    <property type="match status" value="1"/>
</dbReference>
<proteinExistence type="inferred from homology"/>
<name>RL20_CHLP8</name>
<reference key="1">
    <citation type="submission" date="2008-06" db="EMBL/GenBank/DDBJ databases">
        <title>Complete sequence of Chlorobaculum parvum NCIB 8327.</title>
        <authorList>
            <consortium name="US DOE Joint Genome Institute"/>
            <person name="Lucas S."/>
            <person name="Copeland A."/>
            <person name="Lapidus A."/>
            <person name="Glavina del Rio T."/>
            <person name="Dalin E."/>
            <person name="Tice H."/>
            <person name="Bruce D."/>
            <person name="Goodwin L."/>
            <person name="Pitluck S."/>
            <person name="Schmutz J."/>
            <person name="Larimer F."/>
            <person name="Land M."/>
            <person name="Hauser L."/>
            <person name="Kyrpides N."/>
            <person name="Mikhailova N."/>
            <person name="Zhao F."/>
            <person name="Li T."/>
            <person name="Liu Z."/>
            <person name="Overmann J."/>
            <person name="Bryant D.A."/>
            <person name="Richardson P."/>
        </authorList>
    </citation>
    <scope>NUCLEOTIDE SEQUENCE [LARGE SCALE GENOMIC DNA]</scope>
    <source>
        <strain>DSM 263 / NCIMB 8327</strain>
    </source>
</reference>
<evidence type="ECO:0000255" key="1">
    <source>
        <dbReference type="HAMAP-Rule" id="MF_00382"/>
    </source>
</evidence>
<evidence type="ECO:0000305" key="2"/>
<sequence>MPKSTNSVASKARRKRILNKAKGYWGSRGNVLTVVKHAVDKAEQYAYRDRRVKKRTFRSLWIMRINAAARQNGVSYSRLMDAIHKKNIEIDRKALAEIAVKDPEAFAMIVKSALD</sequence>
<feature type="chain" id="PRO_1000122290" description="Large ribosomal subunit protein bL20">
    <location>
        <begin position="1"/>
        <end position="115"/>
    </location>
</feature>
<gene>
    <name evidence="1" type="primary">rplT</name>
    <name type="ordered locus">Cpar_0115</name>
</gene>
<organism>
    <name type="scientific">Chlorobaculum parvum (strain DSM 263 / NCIMB 8327)</name>
    <name type="common">Chlorobium vibrioforme subsp. thiosulfatophilum</name>
    <dbReference type="NCBI Taxonomy" id="517417"/>
    <lineage>
        <taxon>Bacteria</taxon>
        <taxon>Pseudomonadati</taxon>
        <taxon>Chlorobiota</taxon>
        <taxon>Chlorobiia</taxon>
        <taxon>Chlorobiales</taxon>
        <taxon>Chlorobiaceae</taxon>
        <taxon>Chlorobaculum</taxon>
    </lineage>
</organism>